<sequence length="178" mass="20682">MQSADNLIWIDLEMTGLDVDSCKIIEIAAIITDKDLNIIAEAEPIAIYQPDEVLANMNEWCIKTHTETGLTQRVKDSKISTEAAEQQILEFIRKFVPYQSSPLCGNSIWQDRRFLAKYMPNIDEYCHYRMLDVTTLKLLNQYWGDGKSFEKKNTHKALDDIRESIAELKFYRQKLLSI</sequence>
<accession>Q2A5M3</accession>
<name>ORN_FRATH</name>
<reference key="1">
    <citation type="submission" date="2006-03" db="EMBL/GenBank/DDBJ databases">
        <title>Complete genome sequence of Francisella tularensis LVS (Live Vaccine Strain).</title>
        <authorList>
            <person name="Chain P."/>
            <person name="Larimer F."/>
            <person name="Land M."/>
            <person name="Stilwagen S."/>
            <person name="Larsson P."/>
            <person name="Bearden S."/>
            <person name="Chu M."/>
            <person name="Oyston P."/>
            <person name="Forsman M."/>
            <person name="Andersson S."/>
            <person name="Lindler L."/>
            <person name="Titball R."/>
            <person name="Garcia E."/>
        </authorList>
    </citation>
    <scope>NUCLEOTIDE SEQUENCE [LARGE SCALE GENOMIC DNA]</scope>
    <source>
        <strain>LVS</strain>
    </source>
</reference>
<evidence type="ECO:0000255" key="1">
    <source>
        <dbReference type="HAMAP-Rule" id="MF_00045"/>
    </source>
</evidence>
<feature type="chain" id="PRO_1000004249" description="Oligoribonuclease">
    <location>
        <begin position="1"/>
        <end position="178"/>
    </location>
</feature>
<feature type="domain" description="Exonuclease" evidence="1">
    <location>
        <begin position="7"/>
        <end position="168"/>
    </location>
</feature>
<feature type="active site" evidence="1">
    <location>
        <position position="128"/>
    </location>
</feature>
<keyword id="KW-0963">Cytoplasm</keyword>
<keyword id="KW-0269">Exonuclease</keyword>
<keyword id="KW-0378">Hydrolase</keyword>
<keyword id="KW-0540">Nuclease</keyword>
<keyword id="KW-1185">Reference proteome</keyword>
<organism>
    <name type="scientific">Francisella tularensis subsp. holarctica (strain LVS)</name>
    <dbReference type="NCBI Taxonomy" id="376619"/>
    <lineage>
        <taxon>Bacteria</taxon>
        <taxon>Pseudomonadati</taxon>
        <taxon>Pseudomonadota</taxon>
        <taxon>Gammaproteobacteria</taxon>
        <taxon>Thiotrichales</taxon>
        <taxon>Francisellaceae</taxon>
        <taxon>Francisella</taxon>
    </lineage>
</organism>
<dbReference type="EC" id="3.1.15.-" evidence="1"/>
<dbReference type="EMBL" id="AM233362">
    <property type="protein sequence ID" value="CAJ78624.1"/>
    <property type="molecule type" value="Genomic_DNA"/>
</dbReference>
<dbReference type="RefSeq" id="WP_003014199.1">
    <property type="nucleotide sequence ID" value="NZ_CP009694.1"/>
</dbReference>
<dbReference type="SMR" id="Q2A5M3"/>
<dbReference type="KEGG" id="ftl:FTL_0183"/>
<dbReference type="Proteomes" id="UP000001944">
    <property type="component" value="Chromosome"/>
</dbReference>
<dbReference type="GO" id="GO:0005737">
    <property type="term" value="C:cytoplasm"/>
    <property type="evidence" value="ECO:0007669"/>
    <property type="project" value="UniProtKB-SubCell"/>
</dbReference>
<dbReference type="GO" id="GO:0000175">
    <property type="term" value="F:3'-5'-RNA exonuclease activity"/>
    <property type="evidence" value="ECO:0007669"/>
    <property type="project" value="InterPro"/>
</dbReference>
<dbReference type="GO" id="GO:0003676">
    <property type="term" value="F:nucleic acid binding"/>
    <property type="evidence" value="ECO:0007669"/>
    <property type="project" value="InterPro"/>
</dbReference>
<dbReference type="GO" id="GO:0006259">
    <property type="term" value="P:DNA metabolic process"/>
    <property type="evidence" value="ECO:0007669"/>
    <property type="project" value="UniProtKB-ARBA"/>
</dbReference>
<dbReference type="CDD" id="cd06135">
    <property type="entry name" value="Orn"/>
    <property type="match status" value="1"/>
</dbReference>
<dbReference type="FunFam" id="3.30.420.10:FF:000003">
    <property type="entry name" value="Oligoribonuclease"/>
    <property type="match status" value="1"/>
</dbReference>
<dbReference type="Gene3D" id="3.30.420.10">
    <property type="entry name" value="Ribonuclease H-like superfamily/Ribonuclease H"/>
    <property type="match status" value="1"/>
</dbReference>
<dbReference type="HAMAP" id="MF_00045">
    <property type="entry name" value="Oligoribonuclease"/>
    <property type="match status" value="1"/>
</dbReference>
<dbReference type="InterPro" id="IPR013520">
    <property type="entry name" value="Exonuclease_RNaseT/DNA_pol3"/>
</dbReference>
<dbReference type="InterPro" id="IPR022894">
    <property type="entry name" value="Oligoribonuclease"/>
</dbReference>
<dbReference type="InterPro" id="IPR012337">
    <property type="entry name" value="RNaseH-like_sf"/>
</dbReference>
<dbReference type="InterPro" id="IPR036397">
    <property type="entry name" value="RNaseH_sf"/>
</dbReference>
<dbReference type="NCBIfam" id="NF003765">
    <property type="entry name" value="PRK05359.1"/>
    <property type="match status" value="1"/>
</dbReference>
<dbReference type="PANTHER" id="PTHR11046">
    <property type="entry name" value="OLIGORIBONUCLEASE, MITOCHONDRIAL"/>
    <property type="match status" value="1"/>
</dbReference>
<dbReference type="PANTHER" id="PTHR11046:SF0">
    <property type="entry name" value="OLIGORIBONUCLEASE, MITOCHONDRIAL"/>
    <property type="match status" value="1"/>
</dbReference>
<dbReference type="Pfam" id="PF00929">
    <property type="entry name" value="RNase_T"/>
    <property type="match status" value="1"/>
</dbReference>
<dbReference type="SMART" id="SM00479">
    <property type="entry name" value="EXOIII"/>
    <property type="match status" value="1"/>
</dbReference>
<dbReference type="SUPFAM" id="SSF53098">
    <property type="entry name" value="Ribonuclease H-like"/>
    <property type="match status" value="1"/>
</dbReference>
<proteinExistence type="inferred from homology"/>
<protein>
    <recommendedName>
        <fullName evidence="1">Oligoribonuclease</fullName>
        <ecNumber evidence="1">3.1.15.-</ecNumber>
    </recommendedName>
</protein>
<gene>
    <name evidence="1" type="primary">orn</name>
    <name type="ordered locus">FTL_0183</name>
</gene>
<comment type="function">
    <text evidence="1">3'-to-5' exoribonuclease specific for small oligoribonucleotides.</text>
</comment>
<comment type="subcellular location">
    <subcellularLocation>
        <location evidence="1">Cytoplasm</location>
    </subcellularLocation>
</comment>
<comment type="similarity">
    <text evidence="1">Belongs to the oligoribonuclease family.</text>
</comment>